<evidence type="ECO:0000255" key="1"/>
<evidence type="ECO:0000255" key="2">
    <source>
        <dbReference type="PROSITE-ProRule" id="PRU00165"/>
    </source>
</evidence>
<evidence type="ECO:0000256" key="3">
    <source>
        <dbReference type="SAM" id="MobiDB-lite"/>
    </source>
</evidence>
<gene>
    <name type="ORF">DDB_G0281809</name>
</gene>
<name>Y1809_DICDI</name>
<protein>
    <recommendedName>
        <fullName>Rap-GAP domain-containing protein DDB_G0281809</fullName>
    </recommendedName>
</protein>
<organism>
    <name type="scientific">Dictyostelium discoideum</name>
    <name type="common">Social amoeba</name>
    <dbReference type="NCBI Taxonomy" id="44689"/>
    <lineage>
        <taxon>Eukaryota</taxon>
        <taxon>Amoebozoa</taxon>
        <taxon>Evosea</taxon>
        <taxon>Eumycetozoa</taxon>
        <taxon>Dictyostelia</taxon>
        <taxon>Dictyosteliales</taxon>
        <taxon>Dictyosteliaceae</taxon>
        <taxon>Dictyostelium</taxon>
    </lineage>
</organism>
<accession>Q54TK4</accession>
<sequence length="1619" mass="180877">MITNSFTNNFQFIKDTGILKDFPLSVKRILVFQTVNFLLEPPNGNTQFIVTSKEHLQWIMEITEQGFLLPIEDSQIILQCIELYKKWLFDPKHKPTPLIDDDDEYFHKKIIEHLTLIFQPRSYPHYISMSNNNSNNNSNNSNININNNNNNNNNNNNNNNNNNNNNNNNNSNNTNSGSNNKESSNNNSPILSSSNSGSGSSLSLNKDKEGGGSNSGSFLGVNQQSSPPPQQISATTTAATSPTTPTTPIKDTLQQQFLQQEVGGFNEVVQQQQQQQQQQQQQQQQQQQQQQQQQSPSITTGTVKGSKYRESVMPGSSMMVQSSTTALYSSNNYSGNVQLPNISVKELIDSHSVLCQKVLQIYLEMSRGTYSRSFSTDTLEHWNRLMLSITDCILGIHSNSDEMLARNLCPLLLKTLFEVWLQSKTLNPTLWNSLTKYAQGWFHHMPTVNQWNLTCLALTTPLVQSIYTNDHQSKSTITIRLDETSIEFEKEYLYYAWNRILNLIGNPNQIKSPAIFSEAITGIFHLVSMFLSVTNDGNAILHIFGSWIFEAVKTIKPGFDEGISLGSEILLHIFLSCSRKIEFLPIYLSCFYTCISEALWCDGKILRDTIIHSQNIFSSGLPGSRILIPSYIRALNHILTAQGTNDPELRRCAIKILGSILCLPNRYETVKFHNFFPGRTIDPYPPLPNDIIDGKHNELTLPPNEINTYDDLKPHLAYLILSALNTEMSSSNLLTLIWYIMFYQLEYQHQHVKPYPDGKLITSSFIHQSINTILKKCSSFTNQWSHDVILSSFQLLSDLASQHQRIPNFLENASTVVRKLCKFITFKCKETNMSPETEDLISLGCSTIADWVVVSPWIFEGNYLTDTSTFYMVFNALSVAMGAKSPNDIISSNASISSSVSNTGISSIGGGGSSGSGNSSQPSSTGSGSGGVDSGSKSNSSSSSSSQPSSTGGSGNNSNSANGGSFKRPKPYINNNISPKVKEVAQCALKAIMSKISYFPNPYNATPTNTSSKVTESDIITQIKAKAEKHLGIKNFPSEQSLRFYAIGDSIIITVIDQPFTSTSSSPSDSYVTLIIRDMSGKSVINSQLAFLPFKQREISEIQQPITNEKESQIDDGDDSVPTNTTATTIDNTISNNNTTTTSNNSIKSTSNNKVPIKKRSQYNCNEEPFISSYIENVEDFGDLSSYIEKHIDENFTKLIDNQMEVEKQKLFANKYSLTPSITTHPPVLKTSFNGDCKLQQARILLTHLGFLNQENRNKLTPLENSVQFFQSLNMLDSVSERVQIKIPIIYVKKGDSTEDDIYNNVTSNTTQDYQDFIASLGWLVPISTHTGFLGDLDKKNLTHGQFTPYYATHSREMVFFVSTMMPNSDIANNSSQEHKKKLINKTNVSVIWFNGSIEVYEKTLLETFPHAIQIVITPLENDLFRLKTLRKATHSNRMKTGPVNDEIIISKHILANVIRLSVVNSNQSLLNLSSGDGKTQHIYTNRKKLISDITESFKHDMTIQKFYEFHFEPLDQSQLYQNTENLPMANNFKFVKTSSVNLFRKDRTQSALIGTFTLPPPPISPTISPQPSPHLSSSGGSWASSKGGSTQPTTPSGRTSNFLSRRPNLSQSEDQSHK</sequence>
<proteinExistence type="predicted"/>
<dbReference type="EMBL" id="AAFI02000042">
    <property type="protein sequence ID" value="EAL66666.1"/>
    <property type="molecule type" value="Genomic_DNA"/>
</dbReference>
<dbReference type="RefSeq" id="XP_640587.1">
    <property type="nucleotide sequence ID" value="XM_635495.1"/>
</dbReference>
<dbReference type="GlyGen" id="Q54TK4">
    <property type="glycosylation" value="1 site"/>
</dbReference>
<dbReference type="PaxDb" id="44689-DDB0233080"/>
<dbReference type="EnsemblProtists" id="EAL66666">
    <property type="protein sequence ID" value="EAL66666"/>
    <property type="gene ID" value="DDB_G0281809"/>
</dbReference>
<dbReference type="GeneID" id="8623196"/>
<dbReference type="KEGG" id="ddi:DDB_G0281809"/>
<dbReference type="dictyBase" id="DDB_G0281809"/>
<dbReference type="VEuPathDB" id="AmoebaDB:DDB_G0281809"/>
<dbReference type="eggNOG" id="KOG3652">
    <property type="taxonomic scope" value="Eukaryota"/>
</dbReference>
<dbReference type="eggNOG" id="KOG3686">
    <property type="taxonomic scope" value="Eukaryota"/>
</dbReference>
<dbReference type="HOGENOM" id="CLU_243625_0_0_1"/>
<dbReference type="InParanoid" id="Q54TK4"/>
<dbReference type="OMA" id="CWEECCV"/>
<dbReference type="PhylomeDB" id="Q54TK4"/>
<dbReference type="PRO" id="PR:Q54TK4"/>
<dbReference type="Proteomes" id="UP000002195">
    <property type="component" value="Chromosome 3"/>
</dbReference>
<dbReference type="GO" id="GO:0005737">
    <property type="term" value="C:cytoplasm"/>
    <property type="evidence" value="ECO:0000318"/>
    <property type="project" value="GO_Central"/>
</dbReference>
<dbReference type="GO" id="GO:0070685">
    <property type="term" value="C:macropinocytic cup"/>
    <property type="evidence" value="ECO:0000314"/>
    <property type="project" value="dictyBase"/>
</dbReference>
<dbReference type="GO" id="GO:0005886">
    <property type="term" value="C:plasma membrane"/>
    <property type="evidence" value="ECO:0000314"/>
    <property type="project" value="dictyBase"/>
</dbReference>
<dbReference type="GO" id="GO:0032991">
    <property type="term" value="C:protein-containing complex"/>
    <property type="evidence" value="ECO:0000314"/>
    <property type="project" value="dictyBase"/>
</dbReference>
<dbReference type="GO" id="GO:0005096">
    <property type="term" value="F:GTPase activator activity"/>
    <property type="evidence" value="ECO:0000314"/>
    <property type="project" value="dictyBase"/>
</dbReference>
<dbReference type="GO" id="GO:1905301">
    <property type="term" value="P:regulation of macropinocytosis"/>
    <property type="evidence" value="ECO:0000315"/>
    <property type="project" value="dictyBase"/>
</dbReference>
<dbReference type="GO" id="GO:0051056">
    <property type="term" value="P:regulation of small GTPase mediated signal transduction"/>
    <property type="evidence" value="ECO:0007669"/>
    <property type="project" value="InterPro"/>
</dbReference>
<dbReference type="GO" id="GO:0007264">
    <property type="term" value="P:small GTPase-mediated signal transduction"/>
    <property type="evidence" value="ECO:0000314"/>
    <property type="project" value="dictyBase"/>
</dbReference>
<dbReference type="FunFam" id="3.40.50.11210:FF:000001">
    <property type="entry name" value="Ral GTPase-activating protein subunit alpha-1 isoform 1"/>
    <property type="match status" value="1"/>
</dbReference>
<dbReference type="Gene3D" id="3.40.50.11210">
    <property type="entry name" value="Rap/Ran-GAP"/>
    <property type="match status" value="1"/>
</dbReference>
<dbReference type="InterPro" id="IPR039930">
    <property type="entry name" value="RALGAPB"/>
</dbReference>
<dbReference type="InterPro" id="IPR035974">
    <property type="entry name" value="Rap/Ran-GAP_sf"/>
</dbReference>
<dbReference type="InterPro" id="IPR000331">
    <property type="entry name" value="Rap/Ran_GAP_dom"/>
</dbReference>
<dbReference type="InterPro" id="IPR046859">
    <property type="entry name" value="RGPA/RALGAPB_N"/>
</dbReference>
<dbReference type="PANTHER" id="PTHR21344">
    <property type="entry name" value="RAL GTPASE-ACTIVATING PROTEIN SUBUNIT BETA"/>
    <property type="match status" value="1"/>
</dbReference>
<dbReference type="PANTHER" id="PTHR21344:SF1">
    <property type="entry name" value="RAL GTPASE-ACTIVATING PROTEIN SUBUNIT BETA"/>
    <property type="match status" value="1"/>
</dbReference>
<dbReference type="Pfam" id="PF20412">
    <property type="entry name" value="RALGAPB_N"/>
    <property type="match status" value="1"/>
</dbReference>
<dbReference type="Pfam" id="PF02145">
    <property type="entry name" value="Rap_GAP"/>
    <property type="match status" value="1"/>
</dbReference>
<dbReference type="SUPFAM" id="SSF111347">
    <property type="entry name" value="Rap/Ran-GAP"/>
    <property type="match status" value="1"/>
</dbReference>
<dbReference type="PROSITE" id="PS50085">
    <property type="entry name" value="RAPGAP"/>
    <property type="match status" value="1"/>
</dbReference>
<feature type="chain" id="PRO_0000368233" description="Rap-GAP domain-containing protein DDB_G0281809">
    <location>
        <begin position="1"/>
        <end position="1619"/>
    </location>
</feature>
<feature type="domain" description="Rap-GAP" evidence="2">
    <location>
        <begin position="1273"/>
        <end position="1494"/>
    </location>
</feature>
<feature type="region of interest" description="Disordered" evidence="3">
    <location>
        <begin position="128"/>
        <end position="249"/>
    </location>
</feature>
<feature type="region of interest" description="Disordered" evidence="3">
    <location>
        <begin position="289"/>
        <end position="316"/>
    </location>
</feature>
<feature type="region of interest" description="Disordered" evidence="3">
    <location>
        <begin position="907"/>
        <end position="974"/>
    </location>
</feature>
<feature type="region of interest" description="Disordered" evidence="3">
    <location>
        <begin position="1134"/>
        <end position="1153"/>
    </location>
</feature>
<feature type="region of interest" description="Disordered" evidence="3">
    <location>
        <begin position="1554"/>
        <end position="1619"/>
    </location>
</feature>
<feature type="coiled-coil region" evidence="1">
    <location>
        <begin position="265"/>
        <end position="295"/>
    </location>
</feature>
<feature type="compositionally biased region" description="Low complexity" evidence="3">
    <location>
        <begin position="130"/>
        <end position="204"/>
    </location>
</feature>
<feature type="compositionally biased region" description="Low complexity" evidence="3">
    <location>
        <begin position="231"/>
        <end position="249"/>
    </location>
</feature>
<feature type="compositionally biased region" description="Low complexity" evidence="3">
    <location>
        <begin position="916"/>
        <end position="926"/>
    </location>
</feature>
<feature type="compositionally biased region" description="Low complexity" evidence="3">
    <location>
        <begin position="934"/>
        <end position="965"/>
    </location>
</feature>
<feature type="compositionally biased region" description="Pro residues" evidence="3">
    <location>
        <begin position="1559"/>
        <end position="1573"/>
    </location>
</feature>
<feature type="compositionally biased region" description="Low complexity" evidence="3">
    <location>
        <begin position="1574"/>
        <end position="1590"/>
    </location>
</feature>
<feature type="compositionally biased region" description="Polar residues" evidence="3">
    <location>
        <begin position="1591"/>
        <end position="1619"/>
    </location>
</feature>
<reference key="1">
    <citation type="journal article" date="2005" name="Nature">
        <title>The genome of the social amoeba Dictyostelium discoideum.</title>
        <authorList>
            <person name="Eichinger L."/>
            <person name="Pachebat J.A."/>
            <person name="Gloeckner G."/>
            <person name="Rajandream M.A."/>
            <person name="Sucgang R."/>
            <person name="Berriman M."/>
            <person name="Song J."/>
            <person name="Olsen R."/>
            <person name="Szafranski K."/>
            <person name="Xu Q."/>
            <person name="Tunggal B."/>
            <person name="Kummerfeld S."/>
            <person name="Madera M."/>
            <person name="Konfortov B.A."/>
            <person name="Rivero F."/>
            <person name="Bankier A.T."/>
            <person name="Lehmann R."/>
            <person name="Hamlin N."/>
            <person name="Davies R."/>
            <person name="Gaudet P."/>
            <person name="Fey P."/>
            <person name="Pilcher K."/>
            <person name="Chen G."/>
            <person name="Saunders D."/>
            <person name="Sodergren E.J."/>
            <person name="Davis P."/>
            <person name="Kerhornou A."/>
            <person name="Nie X."/>
            <person name="Hall N."/>
            <person name="Anjard C."/>
            <person name="Hemphill L."/>
            <person name="Bason N."/>
            <person name="Farbrother P."/>
            <person name="Desany B."/>
            <person name="Just E."/>
            <person name="Morio T."/>
            <person name="Rost R."/>
            <person name="Churcher C.M."/>
            <person name="Cooper J."/>
            <person name="Haydock S."/>
            <person name="van Driessche N."/>
            <person name="Cronin A."/>
            <person name="Goodhead I."/>
            <person name="Muzny D.M."/>
            <person name="Mourier T."/>
            <person name="Pain A."/>
            <person name="Lu M."/>
            <person name="Harper D."/>
            <person name="Lindsay R."/>
            <person name="Hauser H."/>
            <person name="James K.D."/>
            <person name="Quiles M."/>
            <person name="Madan Babu M."/>
            <person name="Saito T."/>
            <person name="Buchrieser C."/>
            <person name="Wardroper A."/>
            <person name="Felder M."/>
            <person name="Thangavelu M."/>
            <person name="Johnson D."/>
            <person name="Knights A."/>
            <person name="Loulseged H."/>
            <person name="Mungall K.L."/>
            <person name="Oliver K."/>
            <person name="Price C."/>
            <person name="Quail M.A."/>
            <person name="Urushihara H."/>
            <person name="Hernandez J."/>
            <person name="Rabbinowitsch E."/>
            <person name="Steffen D."/>
            <person name="Sanders M."/>
            <person name="Ma J."/>
            <person name="Kohara Y."/>
            <person name="Sharp S."/>
            <person name="Simmonds M.N."/>
            <person name="Spiegler S."/>
            <person name="Tivey A."/>
            <person name="Sugano S."/>
            <person name="White B."/>
            <person name="Walker D."/>
            <person name="Woodward J.R."/>
            <person name="Winckler T."/>
            <person name="Tanaka Y."/>
            <person name="Shaulsky G."/>
            <person name="Schleicher M."/>
            <person name="Weinstock G.M."/>
            <person name="Rosenthal A."/>
            <person name="Cox E.C."/>
            <person name="Chisholm R.L."/>
            <person name="Gibbs R.A."/>
            <person name="Loomis W.F."/>
            <person name="Platzer M."/>
            <person name="Kay R.R."/>
            <person name="Williams J.G."/>
            <person name="Dear P.H."/>
            <person name="Noegel A.A."/>
            <person name="Barrell B.G."/>
            <person name="Kuspa A."/>
        </authorList>
    </citation>
    <scope>NUCLEOTIDE SEQUENCE [LARGE SCALE GENOMIC DNA]</scope>
    <source>
        <strain>AX4</strain>
    </source>
</reference>
<keyword id="KW-0175">Coiled coil</keyword>
<keyword id="KW-0343">GTPase activation</keyword>
<keyword id="KW-1185">Reference proteome</keyword>